<sequence>MFKMELGQLLGWDAYFYSIFAQAMNMEEFTVVALRALRELRFDFFAYGMCSVTPFMRPKTYMYGNYPEHWLQRYQAANYALIDPTVKHSKVSSAPILWSNELFRNCPDLWSEANDSSLCHGLAQPSFNTQGRVGVLSLARKDNAISLQEFEALKPVTKAFAAAALEKISALETDVRAFNTDVEFSERECDVLRWTADGKTSEEIGVIMGVCTDTVNYHHRNIQRKIGASNRVQAVSYAVALGYI</sequence>
<protein>
    <recommendedName>
        <fullName>Transcriptional activator protein PhzR</fullName>
    </recommendedName>
</protein>
<organism>
    <name type="scientific">Pseudomonas fluorescens</name>
    <dbReference type="NCBI Taxonomy" id="294"/>
    <lineage>
        <taxon>Bacteria</taxon>
        <taxon>Pseudomonadati</taxon>
        <taxon>Pseudomonadota</taxon>
        <taxon>Gammaproteobacteria</taxon>
        <taxon>Pseudomonadales</taxon>
        <taxon>Pseudomonadaceae</taxon>
        <taxon>Pseudomonas</taxon>
    </lineage>
</organism>
<evidence type="ECO:0000255" key="1">
    <source>
        <dbReference type="PROSITE-ProRule" id="PRU00411"/>
    </source>
</evidence>
<evidence type="ECO:0000305" key="2"/>
<reference key="1">
    <citation type="journal article" date="1998" name="J. Bacteriol.">
        <title>A seven-gene locus for synthesis of phenazine-1-carboxylic acid by Pseudomonas fluorescens 2-79.</title>
        <authorList>
            <person name="Mavrodi D.V."/>
            <person name="Ksenzenko V.N."/>
            <person name="Bonsall R.F."/>
            <person name="Cook R.J."/>
            <person name="Boronin A.M."/>
            <person name="Thomashow L.S."/>
        </authorList>
    </citation>
    <scope>NUCLEOTIDE SEQUENCE [GENOMIC DNA]</scope>
    <source>
        <strain>NRRL B-15132 / 2-79</strain>
    </source>
</reference>
<keyword id="KW-0010">Activator</keyword>
<keyword id="KW-0045">Antibiotic biosynthesis</keyword>
<keyword id="KW-0238">DNA-binding</keyword>
<keyword id="KW-0673">Quorum sensing</keyword>
<keyword id="KW-0804">Transcription</keyword>
<keyword id="KW-0805">Transcription regulation</keyword>
<accession>Q51786</accession>
<feature type="chain" id="PRO_0000184176" description="Transcriptional activator protein PhzR">
    <location>
        <begin position="1"/>
        <end position="244"/>
    </location>
</feature>
<feature type="domain" description="HTH luxR-type" evidence="1">
    <location>
        <begin position="177"/>
        <end position="242"/>
    </location>
</feature>
<feature type="DNA-binding region" description="H-T-H motif" evidence="1">
    <location>
        <begin position="201"/>
        <end position="220"/>
    </location>
</feature>
<comment type="function">
    <text>Positive regulator of phenazine antibiotic production. May activate the phenazine biosynthetic genes by binding to a DNA sequence upstream of them, or to an intermediate gene which, in turn, interacts with them.</text>
</comment>
<comment type="similarity">
    <text evidence="2">Belongs to the autoinducer-regulated transcriptional regulatory protein family.</text>
</comment>
<dbReference type="EMBL" id="L48616">
    <property type="protein sequence ID" value="AAC18899.1"/>
    <property type="molecule type" value="Genomic_DNA"/>
</dbReference>
<dbReference type="SMR" id="Q51786"/>
<dbReference type="GO" id="GO:0003677">
    <property type="term" value="F:DNA binding"/>
    <property type="evidence" value="ECO:0007669"/>
    <property type="project" value="UniProtKB-KW"/>
</dbReference>
<dbReference type="GO" id="GO:0017000">
    <property type="term" value="P:antibiotic biosynthetic process"/>
    <property type="evidence" value="ECO:0007669"/>
    <property type="project" value="UniProtKB-KW"/>
</dbReference>
<dbReference type="GO" id="GO:0009372">
    <property type="term" value="P:quorum sensing"/>
    <property type="evidence" value="ECO:0007669"/>
    <property type="project" value="UniProtKB-KW"/>
</dbReference>
<dbReference type="GO" id="GO:0006355">
    <property type="term" value="P:regulation of DNA-templated transcription"/>
    <property type="evidence" value="ECO:0007669"/>
    <property type="project" value="InterPro"/>
</dbReference>
<dbReference type="CDD" id="cd06170">
    <property type="entry name" value="LuxR_C_like"/>
    <property type="match status" value="1"/>
</dbReference>
<dbReference type="Gene3D" id="3.30.450.80">
    <property type="entry name" value="Transcription factor LuxR-like, autoinducer-binding domain"/>
    <property type="match status" value="1"/>
</dbReference>
<dbReference type="Gene3D" id="1.10.10.10">
    <property type="entry name" value="Winged helix-like DNA-binding domain superfamily/Winged helix DNA-binding domain"/>
    <property type="match status" value="1"/>
</dbReference>
<dbReference type="InterPro" id="IPR016032">
    <property type="entry name" value="Sig_transdc_resp-reg_C-effctor"/>
</dbReference>
<dbReference type="InterPro" id="IPR005143">
    <property type="entry name" value="TF_LuxR_autoind-bd_dom"/>
</dbReference>
<dbReference type="InterPro" id="IPR036693">
    <property type="entry name" value="TF_LuxR_autoind-bd_dom_sf"/>
</dbReference>
<dbReference type="InterPro" id="IPR000792">
    <property type="entry name" value="Tscrpt_reg_LuxR_C"/>
</dbReference>
<dbReference type="InterPro" id="IPR036388">
    <property type="entry name" value="WH-like_DNA-bd_sf"/>
</dbReference>
<dbReference type="PANTHER" id="PTHR44688">
    <property type="entry name" value="DNA-BINDING TRANSCRIPTIONAL ACTIVATOR DEVR_DOSR"/>
    <property type="match status" value="1"/>
</dbReference>
<dbReference type="PANTHER" id="PTHR44688:SF16">
    <property type="entry name" value="DNA-BINDING TRANSCRIPTIONAL ACTIVATOR DEVR_DOSR"/>
    <property type="match status" value="1"/>
</dbReference>
<dbReference type="Pfam" id="PF03472">
    <property type="entry name" value="Autoind_bind"/>
    <property type="match status" value="1"/>
</dbReference>
<dbReference type="Pfam" id="PF00196">
    <property type="entry name" value="GerE"/>
    <property type="match status" value="1"/>
</dbReference>
<dbReference type="PRINTS" id="PR00038">
    <property type="entry name" value="HTHLUXR"/>
</dbReference>
<dbReference type="SMART" id="SM00421">
    <property type="entry name" value="HTH_LUXR"/>
    <property type="match status" value="1"/>
</dbReference>
<dbReference type="SUPFAM" id="SSF46894">
    <property type="entry name" value="C-terminal effector domain of the bipartite response regulators"/>
    <property type="match status" value="1"/>
</dbReference>
<dbReference type="SUPFAM" id="SSF75516">
    <property type="entry name" value="Pheromone-binding domain of LuxR-like quorum-sensing transcription factors"/>
    <property type="match status" value="1"/>
</dbReference>
<dbReference type="PROSITE" id="PS00622">
    <property type="entry name" value="HTH_LUXR_1"/>
    <property type="match status" value="1"/>
</dbReference>
<dbReference type="PROSITE" id="PS50043">
    <property type="entry name" value="HTH_LUXR_2"/>
    <property type="match status" value="1"/>
</dbReference>
<proteinExistence type="inferred from homology"/>
<name>PHZR_PSEFL</name>
<gene>
    <name type="primary">phzR</name>
</gene>